<name>DHAS_VIBMI</name>
<organism>
    <name type="scientific">Vibrio mimicus</name>
    <dbReference type="NCBI Taxonomy" id="674"/>
    <lineage>
        <taxon>Bacteria</taxon>
        <taxon>Pseudomonadati</taxon>
        <taxon>Pseudomonadota</taxon>
        <taxon>Gammaproteobacteria</taxon>
        <taxon>Vibrionales</taxon>
        <taxon>Vibrionaceae</taxon>
        <taxon>Vibrio</taxon>
    </lineage>
</organism>
<protein>
    <recommendedName>
        <fullName>Aspartate-semialdehyde dehydrogenase</fullName>
        <shortName>ASA dehydrogenase</shortName>
        <shortName>ASADH</shortName>
        <ecNumber>1.2.1.11</ecNumber>
    </recommendedName>
    <alternativeName>
        <fullName>Aspartate-beta-semialdehyde dehydrogenase</fullName>
    </alternativeName>
</protein>
<keyword id="KW-0028">Amino-acid biosynthesis</keyword>
<keyword id="KW-0220">Diaminopimelate biosynthesis</keyword>
<keyword id="KW-0457">Lysine biosynthesis</keyword>
<keyword id="KW-0486">Methionine biosynthesis</keyword>
<keyword id="KW-0521">NADP</keyword>
<keyword id="KW-0560">Oxidoreductase</keyword>
<keyword id="KW-0791">Threonine biosynthesis</keyword>
<accession>Q60080</accession>
<proteinExistence type="inferred from homology"/>
<comment type="function">
    <text evidence="1">Catalyzes the NADPH-dependent formation of L-aspartate-semialdehyde (L-ASA) by the reductive dephosphorylation of L-aspartyl-4-phosphate.</text>
</comment>
<comment type="catalytic activity">
    <reaction>
        <text>L-aspartate 4-semialdehyde + phosphate + NADP(+) = 4-phospho-L-aspartate + NADPH + H(+)</text>
        <dbReference type="Rhea" id="RHEA:24284"/>
        <dbReference type="ChEBI" id="CHEBI:15378"/>
        <dbReference type="ChEBI" id="CHEBI:43474"/>
        <dbReference type="ChEBI" id="CHEBI:57535"/>
        <dbReference type="ChEBI" id="CHEBI:57783"/>
        <dbReference type="ChEBI" id="CHEBI:58349"/>
        <dbReference type="ChEBI" id="CHEBI:537519"/>
        <dbReference type="EC" id="1.2.1.11"/>
    </reaction>
</comment>
<comment type="pathway">
    <text>Amino-acid biosynthesis; L-lysine biosynthesis via DAP pathway; (S)-tetrahydrodipicolinate from L-aspartate: step 2/4.</text>
</comment>
<comment type="pathway">
    <text>Amino-acid biosynthesis; L-methionine biosynthesis via de novo pathway; L-homoserine from L-aspartate: step 2/3.</text>
</comment>
<comment type="pathway">
    <text>Amino-acid biosynthesis; L-threonine biosynthesis; L-threonine from L-aspartate: step 2/5.</text>
</comment>
<comment type="subunit">
    <text evidence="1">Homodimer.</text>
</comment>
<comment type="similarity">
    <text evidence="2">Belongs to the aspartate-semialdehyde dehydrogenase family.</text>
</comment>
<evidence type="ECO:0000250" key="1"/>
<evidence type="ECO:0000305" key="2"/>
<reference key="1">
    <citation type="journal article" date="1995" name="J. Bacteriol.">
        <title>The sixth and seventh cholera pandemics are due to independent clones separately derived from environmental, nontoxigenic, non-O1 Vibrio cholerae.</title>
        <authorList>
            <person name="Karaolis D.K."/>
            <person name="Lan R."/>
            <person name="Reeves P.R."/>
        </authorList>
    </citation>
    <scope>NUCLEOTIDE SEQUENCE [GENOMIC DNA]</scope>
    <source>
        <strain>M547</strain>
    </source>
</reference>
<dbReference type="EC" id="1.2.1.11"/>
<dbReference type="EMBL" id="U25067">
    <property type="protein sequence ID" value="AAC43377.1"/>
    <property type="molecule type" value="Genomic_DNA"/>
</dbReference>
<dbReference type="SMR" id="Q60080"/>
<dbReference type="STRING" id="674.VM_04415"/>
<dbReference type="eggNOG" id="COG0136">
    <property type="taxonomic scope" value="Bacteria"/>
</dbReference>
<dbReference type="UniPathway" id="UPA00034">
    <property type="reaction ID" value="UER00016"/>
</dbReference>
<dbReference type="UniPathway" id="UPA00050">
    <property type="reaction ID" value="UER00463"/>
</dbReference>
<dbReference type="UniPathway" id="UPA00051">
    <property type="reaction ID" value="UER00464"/>
</dbReference>
<dbReference type="GO" id="GO:0004073">
    <property type="term" value="F:aspartate-semialdehyde dehydrogenase activity"/>
    <property type="evidence" value="ECO:0007669"/>
    <property type="project" value="UniProtKB-EC"/>
</dbReference>
<dbReference type="GO" id="GO:0051287">
    <property type="term" value="F:NAD binding"/>
    <property type="evidence" value="ECO:0007669"/>
    <property type="project" value="InterPro"/>
</dbReference>
<dbReference type="GO" id="GO:0050661">
    <property type="term" value="F:NADP binding"/>
    <property type="evidence" value="ECO:0007669"/>
    <property type="project" value="InterPro"/>
</dbReference>
<dbReference type="GO" id="GO:0046983">
    <property type="term" value="F:protein dimerization activity"/>
    <property type="evidence" value="ECO:0007669"/>
    <property type="project" value="InterPro"/>
</dbReference>
<dbReference type="GO" id="GO:0019877">
    <property type="term" value="P:diaminopimelate biosynthetic process"/>
    <property type="evidence" value="ECO:0007669"/>
    <property type="project" value="UniProtKB-KW"/>
</dbReference>
<dbReference type="GO" id="GO:0009097">
    <property type="term" value="P:isoleucine biosynthetic process"/>
    <property type="evidence" value="ECO:0007669"/>
    <property type="project" value="InterPro"/>
</dbReference>
<dbReference type="GO" id="GO:0009089">
    <property type="term" value="P:lysine biosynthetic process via diaminopimelate"/>
    <property type="evidence" value="ECO:0007669"/>
    <property type="project" value="UniProtKB-UniPathway"/>
</dbReference>
<dbReference type="GO" id="GO:0009086">
    <property type="term" value="P:methionine biosynthetic process"/>
    <property type="evidence" value="ECO:0007669"/>
    <property type="project" value="UniProtKB-KW"/>
</dbReference>
<dbReference type="GO" id="GO:0009088">
    <property type="term" value="P:threonine biosynthetic process"/>
    <property type="evidence" value="ECO:0007669"/>
    <property type="project" value="UniProtKB-UniPathway"/>
</dbReference>
<dbReference type="CDD" id="cd18131">
    <property type="entry name" value="ASADH_C_bac_euk_like"/>
    <property type="match status" value="1"/>
</dbReference>
<dbReference type="CDD" id="cd02316">
    <property type="entry name" value="VcASADH2_like_N"/>
    <property type="match status" value="1"/>
</dbReference>
<dbReference type="FunFam" id="3.40.50.720:FF:000099">
    <property type="entry name" value="Aspartate-semialdehyde dehydrogenase"/>
    <property type="match status" value="1"/>
</dbReference>
<dbReference type="FunFam" id="3.30.360.10:FF:000054">
    <property type="entry name" value="Aspartate-semialdehyde dehydrogenase 2"/>
    <property type="match status" value="1"/>
</dbReference>
<dbReference type="Gene3D" id="3.30.360.10">
    <property type="entry name" value="Dihydrodipicolinate Reductase, domain 2"/>
    <property type="match status" value="1"/>
</dbReference>
<dbReference type="Gene3D" id="3.40.50.720">
    <property type="entry name" value="NAD(P)-binding Rossmann-like Domain"/>
    <property type="match status" value="1"/>
</dbReference>
<dbReference type="InterPro" id="IPR000319">
    <property type="entry name" value="Asp-semialdehyde_DH_CS"/>
</dbReference>
<dbReference type="InterPro" id="IPR005986">
    <property type="entry name" value="Asp_semialdehyde_DH_beta"/>
</dbReference>
<dbReference type="InterPro" id="IPR036291">
    <property type="entry name" value="NAD(P)-bd_dom_sf"/>
</dbReference>
<dbReference type="InterPro" id="IPR000534">
    <property type="entry name" value="Semialdehyde_DH_NAD-bd"/>
</dbReference>
<dbReference type="InterPro" id="IPR012280">
    <property type="entry name" value="Semialdhyde_DH_dimer_dom"/>
</dbReference>
<dbReference type="NCBIfam" id="TIGR01296">
    <property type="entry name" value="asd_B"/>
    <property type="match status" value="1"/>
</dbReference>
<dbReference type="NCBIfam" id="NF004224">
    <property type="entry name" value="PRK05671.1"/>
    <property type="match status" value="1"/>
</dbReference>
<dbReference type="NCBIfam" id="NF005957">
    <property type="entry name" value="PRK08040.1"/>
    <property type="match status" value="1"/>
</dbReference>
<dbReference type="NCBIfam" id="NF011456">
    <property type="entry name" value="PRK14874.1"/>
    <property type="match status" value="1"/>
</dbReference>
<dbReference type="PANTHER" id="PTHR46278:SF2">
    <property type="entry name" value="ASPARTATE-SEMIALDEHYDE DEHYDROGENASE"/>
    <property type="match status" value="1"/>
</dbReference>
<dbReference type="PANTHER" id="PTHR46278">
    <property type="entry name" value="DEHYDROGENASE, PUTATIVE-RELATED"/>
    <property type="match status" value="1"/>
</dbReference>
<dbReference type="Pfam" id="PF01118">
    <property type="entry name" value="Semialdhyde_dh"/>
    <property type="match status" value="1"/>
</dbReference>
<dbReference type="Pfam" id="PF02774">
    <property type="entry name" value="Semialdhyde_dhC"/>
    <property type="match status" value="1"/>
</dbReference>
<dbReference type="PIRSF" id="PIRSF000148">
    <property type="entry name" value="ASA_dh"/>
    <property type="match status" value="1"/>
</dbReference>
<dbReference type="SMART" id="SM00859">
    <property type="entry name" value="Semialdhyde_dh"/>
    <property type="match status" value="1"/>
</dbReference>
<dbReference type="SUPFAM" id="SSF55347">
    <property type="entry name" value="Glyceraldehyde-3-phosphate dehydrogenase-like, C-terminal domain"/>
    <property type="match status" value="1"/>
</dbReference>
<dbReference type="SUPFAM" id="SSF51735">
    <property type="entry name" value="NAD(P)-binding Rossmann-fold domains"/>
    <property type="match status" value="1"/>
</dbReference>
<dbReference type="PROSITE" id="PS01103">
    <property type="entry name" value="ASD"/>
    <property type="match status" value="1"/>
</dbReference>
<feature type="chain" id="PRO_0000141395" description="Aspartate-semialdehyde dehydrogenase">
    <location>
        <begin position="1"/>
        <end position="316" status="greater than"/>
    </location>
</feature>
<feature type="active site" description="Acyl-thioester intermediate" evidence="1">
    <location>
        <position position="132"/>
    </location>
</feature>
<feature type="active site" description="Proton acceptor" evidence="1">
    <location>
        <position position="245"/>
    </location>
</feature>
<feature type="binding site" evidence="1">
    <location>
        <begin position="13"/>
        <end position="16"/>
    </location>
    <ligand>
        <name>NADP(+)</name>
        <dbReference type="ChEBI" id="CHEBI:58349"/>
    </ligand>
</feature>
<feature type="binding site" evidence="1">
    <location>
        <begin position="41"/>
        <end position="42"/>
    </location>
    <ligand>
        <name>NADP(+)</name>
        <dbReference type="ChEBI" id="CHEBI:58349"/>
    </ligand>
</feature>
<feature type="binding site" evidence="1">
    <location>
        <position position="101"/>
    </location>
    <ligand>
        <name>phosphate</name>
        <dbReference type="ChEBI" id="CHEBI:43474"/>
    </ligand>
</feature>
<feature type="binding site" evidence="1">
    <location>
        <position position="159"/>
    </location>
    <ligand>
        <name>substrate</name>
    </ligand>
</feature>
<feature type="binding site" evidence="1">
    <location>
        <begin position="162"/>
        <end position="163"/>
    </location>
    <ligand>
        <name>NADP(+)</name>
        <dbReference type="ChEBI" id="CHEBI:58349"/>
    </ligand>
</feature>
<feature type="binding site" evidence="1">
    <location>
        <position position="216"/>
    </location>
    <ligand>
        <name>phosphate</name>
        <dbReference type="ChEBI" id="CHEBI:43474"/>
    </ligand>
</feature>
<feature type="binding site" evidence="1">
    <location>
        <position position="238"/>
    </location>
    <ligand>
        <name>substrate</name>
    </ligand>
</feature>
<feature type="binding site" evidence="1">
    <location>
        <position position="316"/>
    </location>
    <ligand>
        <name>NADP(+)</name>
        <dbReference type="ChEBI" id="CHEBI:58349"/>
    </ligand>
</feature>
<feature type="non-terminal residue">
    <location>
        <position position="316"/>
    </location>
</feature>
<gene>
    <name type="primary">asd</name>
</gene>
<sequence length="316" mass="35139">MSQQFNVAIFGATGAVGETMLEVLQEREFPVDELFLLASERSEGKTYRFNGKTVRVQNVEEFDWSQVHIALFSAGGELSAHWAPIRAEAGVVVIDNTSHFRYDYDIPLVIPEVNPEAIAEFRNRNIIANPNCSTIQMLVALKPIYDAVGIERINVTTYQSVSGAGKAGIDELAGQTAKLLNGYPAETNTFSQQIAFNCIPQIDQFMDNGYTKEEMKMVWETQKIFNDPSIMVNPTCVRVPVFYGHAEAVHVETRAPIDAEQVMDMLDQTDGIELFRGADFPTQVRDAGGKDHVLVGRVRNDISHHSGVNLWVVADN</sequence>